<name>SUCC_SALDC</name>
<dbReference type="EC" id="6.2.1.5" evidence="1"/>
<dbReference type="EMBL" id="CP001144">
    <property type="protein sequence ID" value="ACH74457.1"/>
    <property type="molecule type" value="Genomic_DNA"/>
</dbReference>
<dbReference type="RefSeq" id="WP_001048588.1">
    <property type="nucleotide sequence ID" value="NC_011205.1"/>
</dbReference>
<dbReference type="SMR" id="B5FNF9"/>
<dbReference type="KEGG" id="sed:SeD_A0832"/>
<dbReference type="HOGENOM" id="CLU_037430_4_0_6"/>
<dbReference type="UniPathway" id="UPA00223">
    <property type="reaction ID" value="UER00999"/>
</dbReference>
<dbReference type="Proteomes" id="UP000008322">
    <property type="component" value="Chromosome"/>
</dbReference>
<dbReference type="GO" id="GO:0005829">
    <property type="term" value="C:cytosol"/>
    <property type="evidence" value="ECO:0007669"/>
    <property type="project" value="TreeGrafter"/>
</dbReference>
<dbReference type="GO" id="GO:0042709">
    <property type="term" value="C:succinate-CoA ligase complex"/>
    <property type="evidence" value="ECO:0007669"/>
    <property type="project" value="TreeGrafter"/>
</dbReference>
<dbReference type="GO" id="GO:0005524">
    <property type="term" value="F:ATP binding"/>
    <property type="evidence" value="ECO:0007669"/>
    <property type="project" value="UniProtKB-UniRule"/>
</dbReference>
<dbReference type="GO" id="GO:0000287">
    <property type="term" value="F:magnesium ion binding"/>
    <property type="evidence" value="ECO:0007669"/>
    <property type="project" value="UniProtKB-UniRule"/>
</dbReference>
<dbReference type="GO" id="GO:0004775">
    <property type="term" value="F:succinate-CoA ligase (ADP-forming) activity"/>
    <property type="evidence" value="ECO:0007669"/>
    <property type="project" value="UniProtKB-UniRule"/>
</dbReference>
<dbReference type="GO" id="GO:0004776">
    <property type="term" value="F:succinate-CoA ligase (GDP-forming) activity"/>
    <property type="evidence" value="ECO:0007669"/>
    <property type="project" value="RHEA"/>
</dbReference>
<dbReference type="GO" id="GO:0006104">
    <property type="term" value="P:succinyl-CoA metabolic process"/>
    <property type="evidence" value="ECO:0007669"/>
    <property type="project" value="TreeGrafter"/>
</dbReference>
<dbReference type="GO" id="GO:0006099">
    <property type="term" value="P:tricarboxylic acid cycle"/>
    <property type="evidence" value="ECO:0007669"/>
    <property type="project" value="UniProtKB-UniRule"/>
</dbReference>
<dbReference type="FunFam" id="3.30.1490.20:FF:000002">
    <property type="entry name" value="Succinate--CoA ligase [ADP-forming] subunit beta"/>
    <property type="match status" value="1"/>
</dbReference>
<dbReference type="FunFam" id="3.30.470.20:FF:000002">
    <property type="entry name" value="Succinate--CoA ligase [ADP-forming] subunit beta"/>
    <property type="match status" value="1"/>
</dbReference>
<dbReference type="FunFam" id="3.40.50.261:FF:000001">
    <property type="entry name" value="Succinate--CoA ligase [ADP-forming] subunit beta"/>
    <property type="match status" value="1"/>
</dbReference>
<dbReference type="Gene3D" id="3.30.1490.20">
    <property type="entry name" value="ATP-grasp fold, A domain"/>
    <property type="match status" value="1"/>
</dbReference>
<dbReference type="Gene3D" id="3.30.470.20">
    <property type="entry name" value="ATP-grasp fold, B domain"/>
    <property type="match status" value="1"/>
</dbReference>
<dbReference type="Gene3D" id="3.40.50.261">
    <property type="entry name" value="Succinyl-CoA synthetase domains"/>
    <property type="match status" value="1"/>
</dbReference>
<dbReference type="HAMAP" id="MF_00558">
    <property type="entry name" value="Succ_CoA_beta"/>
    <property type="match status" value="1"/>
</dbReference>
<dbReference type="InterPro" id="IPR011761">
    <property type="entry name" value="ATP-grasp"/>
</dbReference>
<dbReference type="InterPro" id="IPR013650">
    <property type="entry name" value="ATP-grasp_succ-CoA_synth-type"/>
</dbReference>
<dbReference type="InterPro" id="IPR013815">
    <property type="entry name" value="ATP_grasp_subdomain_1"/>
</dbReference>
<dbReference type="InterPro" id="IPR017866">
    <property type="entry name" value="Succ-CoA_synthase_bsu_CS"/>
</dbReference>
<dbReference type="InterPro" id="IPR005811">
    <property type="entry name" value="SUCC_ACL_C"/>
</dbReference>
<dbReference type="InterPro" id="IPR005809">
    <property type="entry name" value="Succ_CoA_ligase-like_bsu"/>
</dbReference>
<dbReference type="InterPro" id="IPR016102">
    <property type="entry name" value="Succinyl-CoA_synth-like"/>
</dbReference>
<dbReference type="NCBIfam" id="NF001913">
    <property type="entry name" value="PRK00696.1"/>
    <property type="match status" value="1"/>
</dbReference>
<dbReference type="NCBIfam" id="TIGR01016">
    <property type="entry name" value="sucCoAbeta"/>
    <property type="match status" value="1"/>
</dbReference>
<dbReference type="PANTHER" id="PTHR11815:SF10">
    <property type="entry name" value="SUCCINATE--COA LIGASE [GDP-FORMING] SUBUNIT BETA, MITOCHONDRIAL"/>
    <property type="match status" value="1"/>
</dbReference>
<dbReference type="PANTHER" id="PTHR11815">
    <property type="entry name" value="SUCCINYL-COA SYNTHETASE BETA CHAIN"/>
    <property type="match status" value="1"/>
</dbReference>
<dbReference type="Pfam" id="PF08442">
    <property type="entry name" value="ATP-grasp_2"/>
    <property type="match status" value="1"/>
</dbReference>
<dbReference type="Pfam" id="PF00549">
    <property type="entry name" value="Ligase_CoA"/>
    <property type="match status" value="1"/>
</dbReference>
<dbReference type="PIRSF" id="PIRSF001554">
    <property type="entry name" value="SucCS_beta"/>
    <property type="match status" value="1"/>
</dbReference>
<dbReference type="SUPFAM" id="SSF56059">
    <property type="entry name" value="Glutathione synthetase ATP-binding domain-like"/>
    <property type="match status" value="1"/>
</dbReference>
<dbReference type="SUPFAM" id="SSF52210">
    <property type="entry name" value="Succinyl-CoA synthetase domains"/>
    <property type="match status" value="1"/>
</dbReference>
<dbReference type="PROSITE" id="PS50975">
    <property type="entry name" value="ATP_GRASP"/>
    <property type="match status" value="1"/>
</dbReference>
<dbReference type="PROSITE" id="PS01217">
    <property type="entry name" value="SUCCINYL_COA_LIG_3"/>
    <property type="match status" value="1"/>
</dbReference>
<sequence>MNLHEYQAKQLFARYGLPAPVGYACTTPREAEEAASKIGAGPWVVKCQVHAGGRGKAGGVKVVKSKEEIRAFAENWLGKRLVTYQTDANGQPVNQILVEAATDIDKELYLGAVVDRSSRRVVFMASTEGGVEIEKVAEETPHLIHKVALDPLTGPMPYQGRELAFKLGLEGKLVQQFTKIFMGLATIFLERDLALIEINPLVITKQGDLICLDGKLGADGNALFRQPDLREMRDQSQEDPREAQAAQWELNYVALDGNIGCMVNGAGLAMGTMDIVKLHGGEPANFLDVGGGATKERVTEAFKIILSDDNVKAVLVNIFGGIVRCDLIADGIIGAVEEVGVNVPVVVRLEGNNAELGAKKLADSGLNIIAAKSLTDAAQQVVAAVEGK</sequence>
<organism>
    <name type="scientific">Salmonella dublin (strain CT_02021853)</name>
    <dbReference type="NCBI Taxonomy" id="439851"/>
    <lineage>
        <taxon>Bacteria</taxon>
        <taxon>Pseudomonadati</taxon>
        <taxon>Pseudomonadota</taxon>
        <taxon>Gammaproteobacteria</taxon>
        <taxon>Enterobacterales</taxon>
        <taxon>Enterobacteriaceae</taxon>
        <taxon>Salmonella</taxon>
    </lineage>
</organism>
<feature type="chain" id="PRO_1000129221" description="Succinate--CoA ligase [ADP-forming] subunit beta">
    <location>
        <begin position="1"/>
        <end position="388"/>
    </location>
</feature>
<feature type="domain" description="ATP-grasp" evidence="1">
    <location>
        <begin position="9"/>
        <end position="244"/>
    </location>
</feature>
<feature type="binding site" evidence="1">
    <location>
        <position position="46"/>
    </location>
    <ligand>
        <name>ATP</name>
        <dbReference type="ChEBI" id="CHEBI:30616"/>
    </ligand>
</feature>
<feature type="binding site" evidence="1">
    <location>
        <begin position="53"/>
        <end position="55"/>
    </location>
    <ligand>
        <name>ATP</name>
        <dbReference type="ChEBI" id="CHEBI:30616"/>
    </ligand>
</feature>
<feature type="binding site" evidence="1">
    <location>
        <position position="99"/>
    </location>
    <ligand>
        <name>ATP</name>
        <dbReference type="ChEBI" id="CHEBI:30616"/>
    </ligand>
</feature>
<feature type="binding site" evidence="1">
    <location>
        <position position="102"/>
    </location>
    <ligand>
        <name>ATP</name>
        <dbReference type="ChEBI" id="CHEBI:30616"/>
    </ligand>
</feature>
<feature type="binding site" evidence="1">
    <location>
        <position position="107"/>
    </location>
    <ligand>
        <name>ATP</name>
        <dbReference type="ChEBI" id="CHEBI:30616"/>
    </ligand>
</feature>
<feature type="binding site" evidence="1">
    <location>
        <position position="199"/>
    </location>
    <ligand>
        <name>Mg(2+)</name>
        <dbReference type="ChEBI" id="CHEBI:18420"/>
    </ligand>
</feature>
<feature type="binding site" evidence="1">
    <location>
        <position position="213"/>
    </location>
    <ligand>
        <name>Mg(2+)</name>
        <dbReference type="ChEBI" id="CHEBI:18420"/>
    </ligand>
</feature>
<feature type="binding site" evidence="1">
    <location>
        <position position="264"/>
    </location>
    <ligand>
        <name>substrate</name>
        <note>ligand shared with subunit alpha</note>
    </ligand>
</feature>
<feature type="binding site" evidence="1">
    <location>
        <begin position="321"/>
        <end position="323"/>
    </location>
    <ligand>
        <name>substrate</name>
        <note>ligand shared with subunit alpha</note>
    </ligand>
</feature>
<comment type="function">
    <text evidence="1">Succinyl-CoA synthetase functions in the citric acid cycle (TCA), coupling the hydrolysis of succinyl-CoA to the synthesis of either ATP or GTP and thus represents the only step of substrate-level phosphorylation in the TCA. The beta subunit provides nucleotide specificity of the enzyme and binds the substrate succinate, while the binding sites for coenzyme A and phosphate are found in the alpha subunit.</text>
</comment>
<comment type="catalytic activity">
    <reaction evidence="1">
        <text>succinate + ATP + CoA = succinyl-CoA + ADP + phosphate</text>
        <dbReference type="Rhea" id="RHEA:17661"/>
        <dbReference type="ChEBI" id="CHEBI:30031"/>
        <dbReference type="ChEBI" id="CHEBI:30616"/>
        <dbReference type="ChEBI" id="CHEBI:43474"/>
        <dbReference type="ChEBI" id="CHEBI:57287"/>
        <dbReference type="ChEBI" id="CHEBI:57292"/>
        <dbReference type="ChEBI" id="CHEBI:456216"/>
        <dbReference type="EC" id="6.2.1.5"/>
    </reaction>
    <physiologicalReaction direction="right-to-left" evidence="1">
        <dbReference type="Rhea" id="RHEA:17663"/>
    </physiologicalReaction>
</comment>
<comment type="catalytic activity">
    <reaction evidence="1">
        <text>GTP + succinate + CoA = succinyl-CoA + GDP + phosphate</text>
        <dbReference type="Rhea" id="RHEA:22120"/>
        <dbReference type="ChEBI" id="CHEBI:30031"/>
        <dbReference type="ChEBI" id="CHEBI:37565"/>
        <dbReference type="ChEBI" id="CHEBI:43474"/>
        <dbReference type="ChEBI" id="CHEBI:57287"/>
        <dbReference type="ChEBI" id="CHEBI:57292"/>
        <dbReference type="ChEBI" id="CHEBI:58189"/>
    </reaction>
    <physiologicalReaction direction="right-to-left" evidence="1">
        <dbReference type="Rhea" id="RHEA:22122"/>
    </physiologicalReaction>
</comment>
<comment type="cofactor">
    <cofactor evidence="1">
        <name>Mg(2+)</name>
        <dbReference type="ChEBI" id="CHEBI:18420"/>
    </cofactor>
    <text evidence="1">Binds 1 Mg(2+) ion per subunit.</text>
</comment>
<comment type="pathway">
    <text evidence="1">Carbohydrate metabolism; tricarboxylic acid cycle; succinate from succinyl-CoA (ligase route): step 1/1.</text>
</comment>
<comment type="subunit">
    <text evidence="1">Heterotetramer of two alpha and two beta subunits.</text>
</comment>
<comment type="similarity">
    <text evidence="1">Belongs to the succinate/malate CoA ligase beta subunit family.</text>
</comment>
<accession>B5FNF9</accession>
<reference key="1">
    <citation type="journal article" date="2011" name="J. Bacteriol.">
        <title>Comparative genomics of 28 Salmonella enterica isolates: evidence for CRISPR-mediated adaptive sublineage evolution.</title>
        <authorList>
            <person name="Fricke W.F."/>
            <person name="Mammel M.K."/>
            <person name="McDermott P.F."/>
            <person name="Tartera C."/>
            <person name="White D.G."/>
            <person name="Leclerc J.E."/>
            <person name="Ravel J."/>
            <person name="Cebula T.A."/>
        </authorList>
    </citation>
    <scope>NUCLEOTIDE SEQUENCE [LARGE SCALE GENOMIC DNA]</scope>
    <source>
        <strain>CT_02021853</strain>
    </source>
</reference>
<gene>
    <name evidence="1" type="primary">sucC</name>
    <name type="ordered locus">SeD_A0832</name>
</gene>
<evidence type="ECO:0000255" key="1">
    <source>
        <dbReference type="HAMAP-Rule" id="MF_00558"/>
    </source>
</evidence>
<protein>
    <recommendedName>
        <fullName evidence="1">Succinate--CoA ligase [ADP-forming] subunit beta</fullName>
        <ecNumber evidence="1">6.2.1.5</ecNumber>
    </recommendedName>
    <alternativeName>
        <fullName evidence="1">Succinyl-CoA synthetase subunit beta</fullName>
        <shortName evidence="1">SCS-beta</shortName>
    </alternativeName>
</protein>
<proteinExistence type="inferred from homology"/>
<keyword id="KW-0067">ATP-binding</keyword>
<keyword id="KW-0436">Ligase</keyword>
<keyword id="KW-0460">Magnesium</keyword>
<keyword id="KW-0479">Metal-binding</keyword>
<keyword id="KW-0547">Nucleotide-binding</keyword>
<keyword id="KW-0816">Tricarboxylic acid cycle</keyword>